<name>CYOB_BUCBP</name>
<sequence length="659" mass="75583">MFGKLSLNSIPYHDPIIMITCCVVILVFLVISIIITIAQKWQYLWNEWCCTVDHKKIAKMYIFLAFIMLFRGFADAIMMRMQQFLVSSYHGNGTGFLPPHHYDQIFTAHGVIMIFFVAMPLVIGLMNFVVPLQIGSRDVAFPFLNNLSLWLTIFSALLMNVSLGIGEFAQTGWLAYPPLSELQYSPGVGVDYWIWSLQISGIGTTLTAINFLVTIIKMRSSGMNWFKIPVFTWTSFCTNILIIASFPVLTVSLLLLTLDRYLGFHFFTNDFGGNMMMYVNLIWIWGHPEVYILILPVFGIFSEVVATFSSKELFGYTSLIWATIVITILSFIVWLHHFFTMGASANVNAFFGITTMIISIPTGVKIFNWLFTMYRGNVRINSIMLWTIGFLITFSIGGMAGVLLSLPVIDFSLHNSLFLVAHFHNVIIGGVVFGCFAGITYWFPKLFGFMLSEKWGKRAFWCWFFGFFCAFMPLYALGLMGMTRRLSQNINPQFHSMLTIAALGTILIFIGIVFQIIQIFVSIRDRNLNRDCSGDPWNGRTLEWSTTSPPPFYNFAVLPIVQFRDSFWESKKSFKSNKLPILYTSFHMPKNTKFGFLIGFFAFLLGFSAVWYIFWLFFISFFVIIYLLVIKSLDTNCDYIISIEEIKEIEKCINIKKMD</sequence>
<proteinExistence type="inferred from homology"/>
<feature type="chain" id="PRO_0000183481" description="Cytochrome bo(3) ubiquinol oxidase subunit 1">
    <location>
        <begin position="1"/>
        <end position="659"/>
    </location>
</feature>
<feature type="topological domain" description="Extracellular" evidence="3">
    <location>
        <begin position="1"/>
        <end position="14"/>
    </location>
</feature>
<feature type="transmembrane region" description="Helical" evidence="3">
    <location>
        <begin position="15"/>
        <end position="35"/>
    </location>
</feature>
<feature type="topological domain" description="Cytoplasmic" evidence="3">
    <location>
        <begin position="36"/>
        <end position="56"/>
    </location>
</feature>
<feature type="transmembrane region" description="Helical" evidence="3">
    <location>
        <begin position="57"/>
        <end position="77"/>
    </location>
</feature>
<feature type="topological domain" description="Extracellular" evidence="3">
    <location>
        <begin position="78"/>
        <end position="109"/>
    </location>
</feature>
<feature type="transmembrane region" description="Helical" evidence="3">
    <location>
        <begin position="110"/>
        <end position="130"/>
    </location>
</feature>
<feature type="topological domain" description="Cytoplasmic" evidence="3">
    <location>
        <begin position="131"/>
        <end position="148"/>
    </location>
</feature>
<feature type="transmembrane region" description="Helical" evidence="3">
    <location>
        <begin position="149"/>
        <end position="169"/>
    </location>
</feature>
<feature type="topological domain" description="Extracellular" evidence="3">
    <location>
        <begin position="170"/>
        <end position="192"/>
    </location>
</feature>
<feature type="transmembrane region" description="Helical" evidence="3">
    <location>
        <begin position="193"/>
        <end position="213"/>
    </location>
</feature>
<feature type="topological domain" description="Cytoplasmic" evidence="3">
    <location>
        <begin position="214"/>
        <end position="235"/>
    </location>
</feature>
<feature type="transmembrane region" description="Helical" evidence="3">
    <location>
        <begin position="236"/>
        <end position="256"/>
    </location>
</feature>
<feature type="topological domain" description="Extracellular" evidence="3">
    <location>
        <begin position="257"/>
        <end position="280"/>
    </location>
</feature>
<feature type="transmembrane region" description="Helical" evidence="3">
    <location>
        <begin position="281"/>
        <end position="301"/>
    </location>
</feature>
<feature type="topological domain" description="Cytoplasmic" evidence="3">
    <location>
        <begin position="302"/>
        <end position="318"/>
    </location>
</feature>
<feature type="transmembrane region" description="Helical" evidence="3">
    <location>
        <begin position="319"/>
        <end position="339"/>
    </location>
</feature>
<feature type="topological domain" description="Extracellular" evidence="3">
    <location>
        <begin position="340"/>
        <end position="350"/>
    </location>
</feature>
<feature type="transmembrane region" description="Helical" evidence="3">
    <location>
        <begin position="351"/>
        <end position="371"/>
    </location>
</feature>
<feature type="topological domain" description="Cytoplasmic" evidence="3">
    <location>
        <begin position="372"/>
        <end position="382"/>
    </location>
</feature>
<feature type="transmembrane region" description="Helical" evidence="3">
    <location>
        <begin position="383"/>
        <end position="403"/>
    </location>
</feature>
<feature type="topological domain" description="Extracellular" evidence="3">
    <location>
        <begin position="404"/>
        <end position="416"/>
    </location>
</feature>
<feature type="transmembrane region" description="Helical" evidence="3">
    <location>
        <begin position="417"/>
        <end position="437"/>
    </location>
</feature>
<feature type="topological domain" description="Cytoplasmic" evidence="3">
    <location>
        <begin position="438"/>
        <end position="459"/>
    </location>
</feature>
<feature type="transmembrane region" description="Helical" evidence="3">
    <location>
        <begin position="460"/>
        <end position="480"/>
    </location>
</feature>
<feature type="topological domain" description="Extracellular" evidence="3">
    <location>
        <begin position="481"/>
        <end position="499"/>
    </location>
</feature>
<feature type="transmembrane region" description="Helical" evidence="3">
    <location>
        <begin position="500"/>
        <end position="520"/>
    </location>
</feature>
<feature type="topological domain" description="Cytoplasmic" evidence="3">
    <location>
        <begin position="521"/>
        <end position="587"/>
    </location>
</feature>
<feature type="transmembrane region" description="Helical" evidence="3">
    <location>
        <begin position="588"/>
        <end position="608"/>
    </location>
</feature>
<feature type="topological domain" description="Extracellular" evidence="3">
    <location>
        <position position="609"/>
    </location>
</feature>
<feature type="transmembrane region" description="Helical" evidence="3">
    <location>
        <begin position="610"/>
        <end position="630"/>
    </location>
</feature>
<feature type="topological domain" description="Cytoplasmic" evidence="3">
    <location>
        <begin position="631"/>
        <end position="659"/>
    </location>
</feature>
<feature type="binding site" evidence="2">
    <location>
        <position position="71"/>
    </location>
    <ligand>
        <name>a ubiquinone</name>
        <dbReference type="ChEBI" id="CHEBI:16389"/>
    </ligand>
</feature>
<feature type="binding site" evidence="2">
    <location>
        <position position="75"/>
    </location>
    <ligand>
        <name>a ubiquinone</name>
        <dbReference type="ChEBI" id="CHEBI:16389"/>
    </ligand>
</feature>
<feature type="binding site" evidence="2">
    <location>
        <position position="101"/>
    </location>
    <ligand>
        <name>a ubiquinone</name>
        <dbReference type="ChEBI" id="CHEBI:16389"/>
    </ligand>
</feature>
<feature type="binding site" description="axial binding residue" evidence="2">
    <location>
        <position position="109"/>
    </location>
    <ligand>
        <name>heme b</name>
        <dbReference type="ChEBI" id="CHEBI:60344"/>
    </ligand>
    <ligandPart>
        <name>Fe</name>
        <dbReference type="ChEBI" id="CHEBI:18248"/>
    </ligandPart>
</feature>
<feature type="binding site" evidence="2">
    <location>
        <position position="173"/>
    </location>
    <ligand>
        <name>heme b</name>
        <dbReference type="ChEBI" id="CHEBI:60344"/>
    </ligand>
</feature>
<feature type="binding site" evidence="2">
    <location>
        <position position="287"/>
    </location>
    <ligand>
        <name>Cu(2+)</name>
        <dbReference type="ChEBI" id="CHEBI:29036"/>
    </ligand>
</feature>
<feature type="binding site" evidence="2">
    <location>
        <position position="291"/>
    </location>
    <ligand>
        <name>Fe(II)-heme o</name>
        <dbReference type="ChEBI" id="CHEBI:60530"/>
    </ligand>
</feature>
<feature type="binding site" evidence="2">
    <location>
        <position position="336"/>
    </location>
    <ligand>
        <name>Cu(2+)</name>
        <dbReference type="ChEBI" id="CHEBI:29036"/>
    </ligand>
</feature>
<feature type="binding site" evidence="2">
    <location>
        <position position="337"/>
    </location>
    <ligand>
        <name>Cu(2+)</name>
        <dbReference type="ChEBI" id="CHEBI:29036"/>
    </ligand>
</feature>
<feature type="binding site" evidence="2">
    <location>
        <position position="414"/>
    </location>
    <ligand>
        <name>Fe(II)-heme o</name>
        <dbReference type="ChEBI" id="CHEBI:60530"/>
    </ligand>
</feature>
<feature type="binding site" description="axial binding residue" evidence="2">
    <location>
        <position position="422"/>
    </location>
    <ligand>
        <name>Fe(II)-heme o</name>
        <dbReference type="ChEBI" id="CHEBI:60530"/>
    </ligand>
    <ligandPart>
        <name>Fe</name>
        <dbReference type="ChEBI" id="CHEBI:18248"/>
    </ligandPart>
</feature>
<feature type="binding site" description="axial binding residue" evidence="2">
    <location>
        <position position="424"/>
    </location>
    <ligand>
        <name>heme b</name>
        <dbReference type="ChEBI" id="CHEBI:60344"/>
    </ligand>
    <ligandPart>
        <name>Fe</name>
        <dbReference type="ChEBI" id="CHEBI:18248"/>
    </ligandPart>
</feature>
<feature type="binding site" evidence="2">
    <location>
        <position position="484"/>
    </location>
    <ligand>
        <name>heme b</name>
        <dbReference type="ChEBI" id="CHEBI:60344"/>
    </ligand>
</feature>
<feature type="binding site" evidence="2">
    <location>
        <position position="485"/>
    </location>
    <ligand>
        <name>heme b</name>
        <dbReference type="ChEBI" id="CHEBI:60344"/>
    </ligand>
</feature>
<feature type="cross-link" description="1'-histidyl-3'-tyrosine (His-Tyr)" evidence="1">
    <location>
        <begin position="287"/>
        <end position="291"/>
    </location>
</feature>
<reference key="1">
    <citation type="journal article" date="2003" name="Proc. Natl. Acad. Sci. U.S.A.">
        <title>Reductive genome evolution in Buchnera aphidicola.</title>
        <authorList>
            <person name="van Ham R.C.H.J."/>
            <person name="Kamerbeek J."/>
            <person name="Palacios C."/>
            <person name="Rausell C."/>
            <person name="Abascal F."/>
            <person name="Bastolla U."/>
            <person name="Fernandez J.M."/>
            <person name="Jimenez L."/>
            <person name="Postigo M."/>
            <person name="Silva F.J."/>
            <person name="Tamames J."/>
            <person name="Viguera E."/>
            <person name="Latorre A."/>
            <person name="Valencia A."/>
            <person name="Moran F."/>
            <person name="Moya A."/>
        </authorList>
    </citation>
    <scope>NUCLEOTIDE SEQUENCE [LARGE SCALE GENOMIC DNA]</scope>
    <source>
        <strain>Bp</strain>
    </source>
</reference>
<protein>
    <recommendedName>
        <fullName>Cytochrome bo(3) ubiquinol oxidase subunit 1</fullName>
        <ecNumber evidence="2">7.1.1.3</ecNumber>
    </recommendedName>
    <alternativeName>
        <fullName>Cytochrome o ubiquinol oxidase subunit 1</fullName>
        <shortName>Cytochrome o subunit 1</shortName>
    </alternativeName>
    <alternativeName>
        <fullName>Oxidase bo(3) subunit 1</fullName>
    </alternativeName>
    <alternativeName>
        <fullName>Ubiquinol oxidase polypeptide I</fullName>
    </alternativeName>
    <alternativeName>
        <fullName>Ubiquinol oxidase subunit 1</fullName>
    </alternativeName>
</protein>
<comment type="function">
    <text evidence="2">Cytochrome bo(3) ubiquinol oxidase is the terminal enzyme in the aerobic respiratory chain. Catalyzes the four-electron reduction of O2 to water, using a ubiquinol as a membrane soluble electron donor for molecular oxygen reduction. Has proton pump activity across the membrane in addition to electron transfer, pumping 2 protons/electron and generating a proton motive force. All the redox centers of this enzyme complex are located within the largest subunit, subunit I. Protons are probably pumped via D- and K- channels found in this subunit.</text>
</comment>
<comment type="catalytic activity">
    <reaction evidence="2">
        <text>2 a ubiquinol + O2 + n H(+)(in) = 2 a ubiquinone + 2 H2O + n H(+)(out)</text>
        <dbReference type="Rhea" id="RHEA:30251"/>
        <dbReference type="Rhea" id="RHEA-COMP:9565"/>
        <dbReference type="Rhea" id="RHEA-COMP:9566"/>
        <dbReference type="ChEBI" id="CHEBI:15377"/>
        <dbReference type="ChEBI" id="CHEBI:15378"/>
        <dbReference type="ChEBI" id="CHEBI:15379"/>
        <dbReference type="ChEBI" id="CHEBI:16389"/>
        <dbReference type="ChEBI" id="CHEBI:17976"/>
        <dbReference type="EC" id="7.1.1.3"/>
    </reaction>
</comment>
<comment type="cofactor">
    <cofactor evidence="2">
        <name>Cu(2+)</name>
        <dbReference type="ChEBI" id="CHEBI:29036"/>
    </cofactor>
    <text evidence="2">Binds 1 copper B ion per subunit.</text>
</comment>
<comment type="cofactor">
    <cofactor evidence="2">
        <name>heme b</name>
        <dbReference type="ChEBI" id="CHEBI:60344"/>
    </cofactor>
    <text evidence="2">Binds 1 low-spin heme b per subunit.</text>
</comment>
<comment type="cofactor">
    <cofactor evidence="2">
        <name>Fe(II)-heme o</name>
        <dbReference type="ChEBI" id="CHEBI:60530"/>
    </cofactor>
    <text evidence="2">Binds 1 high-spin heme o per subunit, also named heme o(3).</text>
</comment>
<comment type="subunit">
    <text evidence="2">The cytochrome bo(3) ubiquinol oxidase complex is a heterooctamer of two A chains, two B chains, two C chains and two D chains.</text>
</comment>
<comment type="subcellular location">
    <subcellularLocation>
        <location evidence="1">Cell membrane</location>
        <topology evidence="1">Multi-pass membrane protein</topology>
    </subcellularLocation>
</comment>
<comment type="miscellaneous">
    <text>Ubiquinol oxidase catalyzes the terminal step in the electron transport chain.</text>
</comment>
<comment type="similarity">
    <text evidence="4">Belongs to the heme-copper respiratory oxidase family.</text>
</comment>
<dbReference type="EC" id="7.1.1.3" evidence="2"/>
<dbReference type="EMBL" id="AE016826">
    <property type="protein sequence ID" value="AAO27126.1"/>
    <property type="molecule type" value="Genomic_DNA"/>
</dbReference>
<dbReference type="RefSeq" id="WP_011091527.1">
    <property type="nucleotide sequence ID" value="NC_004545.1"/>
</dbReference>
<dbReference type="SMR" id="Q89AA4"/>
<dbReference type="STRING" id="224915.bbp_416"/>
<dbReference type="KEGG" id="bab:bbp_416"/>
<dbReference type="eggNOG" id="COG0843">
    <property type="taxonomic scope" value="Bacteria"/>
</dbReference>
<dbReference type="HOGENOM" id="CLU_011899_7_1_6"/>
<dbReference type="OrthoDB" id="9803294at2"/>
<dbReference type="Proteomes" id="UP000000601">
    <property type="component" value="Chromosome"/>
</dbReference>
<dbReference type="GO" id="GO:0005886">
    <property type="term" value="C:plasma membrane"/>
    <property type="evidence" value="ECO:0007669"/>
    <property type="project" value="UniProtKB-SubCell"/>
</dbReference>
<dbReference type="GO" id="GO:0009486">
    <property type="term" value="F:cytochrome bo3 ubiquinol oxidase activity"/>
    <property type="evidence" value="ECO:0007669"/>
    <property type="project" value="UniProtKB-EC"/>
</dbReference>
<dbReference type="GO" id="GO:0004129">
    <property type="term" value="F:cytochrome-c oxidase activity"/>
    <property type="evidence" value="ECO:0007669"/>
    <property type="project" value="InterPro"/>
</dbReference>
<dbReference type="GO" id="GO:0020037">
    <property type="term" value="F:heme binding"/>
    <property type="evidence" value="ECO:0007669"/>
    <property type="project" value="InterPro"/>
</dbReference>
<dbReference type="GO" id="GO:0046872">
    <property type="term" value="F:metal ion binding"/>
    <property type="evidence" value="ECO:0007669"/>
    <property type="project" value="UniProtKB-KW"/>
</dbReference>
<dbReference type="GO" id="GO:0016682">
    <property type="term" value="F:oxidoreductase activity, acting on diphenols and related substances as donors, oxygen as acceptor"/>
    <property type="evidence" value="ECO:0007669"/>
    <property type="project" value="InterPro"/>
</dbReference>
<dbReference type="GO" id="GO:0009060">
    <property type="term" value="P:aerobic respiration"/>
    <property type="evidence" value="ECO:0007669"/>
    <property type="project" value="InterPro"/>
</dbReference>
<dbReference type="GO" id="GO:0015990">
    <property type="term" value="P:electron transport coupled proton transport"/>
    <property type="evidence" value="ECO:0007669"/>
    <property type="project" value="TreeGrafter"/>
</dbReference>
<dbReference type="GO" id="GO:0022904">
    <property type="term" value="P:respiratory electron transport chain"/>
    <property type="evidence" value="ECO:0007669"/>
    <property type="project" value="TreeGrafter"/>
</dbReference>
<dbReference type="CDD" id="cd01662">
    <property type="entry name" value="Ubiquinol_Oxidase_I"/>
    <property type="match status" value="1"/>
</dbReference>
<dbReference type="FunFam" id="1.20.210.10:FF:000002">
    <property type="entry name" value="Cytochrome o ubiquinol oxidase, subunit I"/>
    <property type="match status" value="1"/>
</dbReference>
<dbReference type="Gene3D" id="1.20.210.10">
    <property type="entry name" value="Cytochrome c oxidase-like, subunit I domain"/>
    <property type="match status" value="1"/>
</dbReference>
<dbReference type="InterPro" id="IPR023616">
    <property type="entry name" value="Cyt_c_oxase-like_su1_dom"/>
</dbReference>
<dbReference type="InterPro" id="IPR036927">
    <property type="entry name" value="Cyt_c_oxase-like_su1_sf"/>
</dbReference>
<dbReference type="InterPro" id="IPR000883">
    <property type="entry name" value="Cyt_C_Oxase_1"/>
</dbReference>
<dbReference type="InterPro" id="IPR023615">
    <property type="entry name" value="Cyt_c_Oxase_su1_BS"/>
</dbReference>
<dbReference type="InterPro" id="IPR014207">
    <property type="entry name" value="Cyt_c_ubiqinol_oxidase_su1"/>
</dbReference>
<dbReference type="NCBIfam" id="TIGR02843">
    <property type="entry name" value="CyoB"/>
    <property type="match status" value="1"/>
</dbReference>
<dbReference type="PANTHER" id="PTHR10422:SF35">
    <property type="entry name" value="CYTOCHROME BO(3) UBIQUINOL OXIDASE SUBUNIT 1"/>
    <property type="match status" value="1"/>
</dbReference>
<dbReference type="PANTHER" id="PTHR10422">
    <property type="entry name" value="CYTOCHROME C OXIDASE SUBUNIT 1"/>
    <property type="match status" value="1"/>
</dbReference>
<dbReference type="Pfam" id="PF00115">
    <property type="entry name" value="COX1"/>
    <property type="match status" value="1"/>
</dbReference>
<dbReference type="PRINTS" id="PR01165">
    <property type="entry name" value="CYCOXIDASEI"/>
</dbReference>
<dbReference type="SUPFAM" id="SSF81442">
    <property type="entry name" value="Cytochrome c oxidase subunit I-like"/>
    <property type="match status" value="1"/>
</dbReference>
<dbReference type="PROSITE" id="PS50855">
    <property type="entry name" value="COX1"/>
    <property type="match status" value="1"/>
</dbReference>
<dbReference type="PROSITE" id="PS00077">
    <property type="entry name" value="COX1_CUB"/>
    <property type="match status" value="1"/>
</dbReference>
<accession>Q89AA4</accession>
<keyword id="KW-1003">Cell membrane</keyword>
<keyword id="KW-0186">Copper</keyword>
<keyword id="KW-0249">Electron transport</keyword>
<keyword id="KW-0349">Heme</keyword>
<keyword id="KW-0375">Hydrogen ion transport</keyword>
<keyword id="KW-0406">Ion transport</keyword>
<keyword id="KW-0408">Iron</keyword>
<keyword id="KW-0472">Membrane</keyword>
<keyword id="KW-0479">Metal-binding</keyword>
<keyword id="KW-1185">Reference proteome</keyword>
<keyword id="KW-0679">Respiratory chain</keyword>
<keyword id="KW-1278">Translocase</keyword>
<keyword id="KW-0812">Transmembrane</keyword>
<keyword id="KW-1133">Transmembrane helix</keyword>
<keyword id="KW-0813">Transport</keyword>
<evidence type="ECO:0000250" key="1"/>
<evidence type="ECO:0000250" key="2">
    <source>
        <dbReference type="UniProtKB" id="P0ABI8"/>
    </source>
</evidence>
<evidence type="ECO:0000255" key="3"/>
<evidence type="ECO:0000305" key="4"/>
<organism>
    <name type="scientific">Buchnera aphidicola subsp. Baizongia pistaciae (strain Bp)</name>
    <dbReference type="NCBI Taxonomy" id="224915"/>
    <lineage>
        <taxon>Bacteria</taxon>
        <taxon>Pseudomonadati</taxon>
        <taxon>Pseudomonadota</taxon>
        <taxon>Gammaproteobacteria</taxon>
        <taxon>Enterobacterales</taxon>
        <taxon>Erwiniaceae</taxon>
        <taxon>Buchnera</taxon>
    </lineage>
</organism>
<gene>
    <name type="primary">cyoB</name>
    <name type="ordered locus">bbp_416</name>
</gene>